<protein>
    <recommendedName>
        <fullName evidence="1">Thiazole synthase</fullName>
        <ecNumber evidence="1">2.8.1.10</ecNumber>
    </recommendedName>
</protein>
<organism>
    <name type="scientific">Clostridium kluyveri (strain ATCC 8527 / DSM 555 / NBRC 12016 / NCIMB 10680 / K1)</name>
    <dbReference type="NCBI Taxonomy" id="431943"/>
    <lineage>
        <taxon>Bacteria</taxon>
        <taxon>Bacillati</taxon>
        <taxon>Bacillota</taxon>
        <taxon>Clostridia</taxon>
        <taxon>Eubacteriales</taxon>
        <taxon>Clostridiaceae</taxon>
        <taxon>Clostridium</taxon>
    </lineage>
</organism>
<comment type="function">
    <text evidence="1">Catalyzes the rearrangement of 1-deoxy-D-xylulose 5-phosphate (DXP) to produce the thiazole phosphate moiety of thiamine. Sulfur is provided by the thiocarboxylate moiety of the carrier protein ThiS. In vitro, sulfur can be provided by H(2)S.</text>
</comment>
<comment type="catalytic activity">
    <reaction evidence="1">
        <text>[ThiS sulfur-carrier protein]-C-terminal-Gly-aminoethanethioate + 2-iminoacetate + 1-deoxy-D-xylulose 5-phosphate = [ThiS sulfur-carrier protein]-C-terminal Gly-Gly + 2-[(2R,5Z)-2-carboxy-4-methylthiazol-5(2H)-ylidene]ethyl phosphate + 2 H2O + H(+)</text>
        <dbReference type="Rhea" id="RHEA:26297"/>
        <dbReference type="Rhea" id="RHEA-COMP:12909"/>
        <dbReference type="Rhea" id="RHEA-COMP:19908"/>
        <dbReference type="ChEBI" id="CHEBI:15377"/>
        <dbReference type="ChEBI" id="CHEBI:15378"/>
        <dbReference type="ChEBI" id="CHEBI:57792"/>
        <dbReference type="ChEBI" id="CHEBI:62899"/>
        <dbReference type="ChEBI" id="CHEBI:77846"/>
        <dbReference type="ChEBI" id="CHEBI:90778"/>
        <dbReference type="ChEBI" id="CHEBI:232372"/>
        <dbReference type="EC" id="2.8.1.10"/>
    </reaction>
</comment>
<comment type="pathway">
    <text evidence="1">Cofactor biosynthesis; thiamine diphosphate biosynthesis.</text>
</comment>
<comment type="subunit">
    <text evidence="1">Homotetramer. Forms heterodimers with either ThiH or ThiS.</text>
</comment>
<comment type="subcellular location">
    <subcellularLocation>
        <location evidence="1">Cytoplasm</location>
    </subcellularLocation>
</comment>
<comment type="similarity">
    <text evidence="1">Belongs to the ThiG family.</text>
</comment>
<reference key="1">
    <citation type="journal article" date="2008" name="Proc. Natl. Acad. Sci. U.S.A.">
        <title>The genome of Clostridium kluyveri, a strict anaerobe with unique metabolic features.</title>
        <authorList>
            <person name="Seedorf H."/>
            <person name="Fricke W.F."/>
            <person name="Veith B."/>
            <person name="Brueggemann H."/>
            <person name="Liesegang H."/>
            <person name="Strittmatter A."/>
            <person name="Miethke M."/>
            <person name="Buckel W."/>
            <person name="Hinderberger J."/>
            <person name="Li F."/>
            <person name="Hagemeier C."/>
            <person name="Thauer R.K."/>
            <person name="Gottschalk G."/>
        </authorList>
    </citation>
    <scope>NUCLEOTIDE SEQUENCE [LARGE SCALE GENOMIC DNA]</scope>
    <source>
        <strain>ATCC 8527 / DSM 555 / NBRC 12016 / NCIMB 10680 / K1</strain>
    </source>
</reference>
<accession>A5N8P8</accession>
<dbReference type="EC" id="2.8.1.10" evidence="1"/>
<dbReference type="EMBL" id="CP000673">
    <property type="protein sequence ID" value="EDK33679.1"/>
    <property type="molecule type" value="Genomic_DNA"/>
</dbReference>
<dbReference type="RefSeq" id="WP_012102032.1">
    <property type="nucleotide sequence ID" value="NC_009706.1"/>
</dbReference>
<dbReference type="SMR" id="A5N8P8"/>
<dbReference type="STRING" id="431943.CKL_1637"/>
<dbReference type="KEGG" id="ckl:CKL_1637"/>
<dbReference type="eggNOG" id="COG2022">
    <property type="taxonomic scope" value="Bacteria"/>
</dbReference>
<dbReference type="HOGENOM" id="CLU_062233_1_0_9"/>
<dbReference type="UniPathway" id="UPA00060"/>
<dbReference type="Proteomes" id="UP000002411">
    <property type="component" value="Chromosome"/>
</dbReference>
<dbReference type="GO" id="GO:0005737">
    <property type="term" value="C:cytoplasm"/>
    <property type="evidence" value="ECO:0007669"/>
    <property type="project" value="UniProtKB-SubCell"/>
</dbReference>
<dbReference type="GO" id="GO:1990107">
    <property type="term" value="F:thiazole synthase activity"/>
    <property type="evidence" value="ECO:0007669"/>
    <property type="project" value="UniProtKB-EC"/>
</dbReference>
<dbReference type="GO" id="GO:0009229">
    <property type="term" value="P:thiamine diphosphate biosynthetic process"/>
    <property type="evidence" value="ECO:0007669"/>
    <property type="project" value="UniProtKB-UniRule"/>
</dbReference>
<dbReference type="CDD" id="cd04728">
    <property type="entry name" value="ThiG"/>
    <property type="match status" value="1"/>
</dbReference>
<dbReference type="Gene3D" id="3.20.20.70">
    <property type="entry name" value="Aldolase class I"/>
    <property type="match status" value="1"/>
</dbReference>
<dbReference type="HAMAP" id="MF_00443">
    <property type="entry name" value="ThiG"/>
    <property type="match status" value="1"/>
</dbReference>
<dbReference type="InterPro" id="IPR013785">
    <property type="entry name" value="Aldolase_TIM"/>
</dbReference>
<dbReference type="InterPro" id="IPR033983">
    <property type="entry name" value="Thiazole_synthase_ThiG"/>
</dbReference>
<dbReference type="InterPro" id="IPR008867">
    <property type="entry name" value="ThiG"/>
</dbReference>
<dbReference type="PANTHER" id="PTHR34266">
    <property type="entry name" value="THIAZOLE SYNTHASE"/>
    <property type="match status" value="1"/>
</dbReference>
<dbReference type="PANTHER" id="PTHR34266:SF2">
    <property type="entry name" value="THIAZOLE SYNTHASE"/>
    <property type="match status" value="1"/>
</dbReference>
<dbReference type="Pfam" id="PF05690">
    <property type="entry name" value="ThiG"/>
    <property type="match status" value="1"/>
</dbReference>
<dbReference type="SUPFAM" id="SSF110399">
    <property type="entry name" value="ThiG-like"/>
    <property type="match status" value="1"/>
</dbReference>
<evidence type="ECO:0000255" key="1">
    <source>
        <dbReference type="HAMAP-Rule" id="MF_00443"/>
    </source>
</evidence>
<gene>
    <name evidence="1" type="primary">thiG</name>
    <name type="ordered locus">CKL_1637</name>
</gene>
<proteinExistence type="inferred from homology"/>
<name>THIG_CLOK5</name>
<keyword id="KW-0963">Cytoplasm</keyword>
<keyword id="KW-1185">Reference proteome</keyword>
<keyword id="KW-0704">Schiff base</keyword>
<keyword id="KW-0784">Thiamine biosynthesis</keyword>
<keyword id="KW-0808">Transferase</keyword>
<sequence>MDNLIIGGTEVKSRLFIGTGKYSSNSIIPRILKKSKSQVITIALRRVDITSKEENMLNYINKDCILLPNTSGARNAEEAIRLARIARAAGCGNWIKIEVISDNKYLLPDNYETIKATEVLAKEGFIVLPYMNPDLMDTKRLVNAGAAAVMPLGAPIGTNRGIATKEMIRIIIDEIATPIVVDAGIGKPSQAAEAMEMGADAVLVNTAIASAGNPVLMAEAFGLAVESGRKAFLAKLGQEKLMAEASSPLTGFLR</sequence>
<feature type="chain" id="PRO_1000080868" description="Thiazole synthase">
    <location>
        <begin position="1"/>
        <end position="254"/>
    </location>
</feature>
<feature type="active site" description="Schiff-base intermediate with DXP" evidence="1">
    <location>
        <position position="96"/>
    </location>
</feature>
<feature type="binding site" evidence="1">
    <location>
        <position position="157"/>
    </location>
    <ligand>
        <name>1-deoxy-D-xylulose 5-phosphate</name>
        <dbReference type="ChEBI" id="CHEBI:57792"/>
    </ligand>
</feature>
<feature type="binding site" evidence="1">
    <location>
        <begin position="183"/>
        <end position="184"/>
    </location>
    <ligand>
        <name>1-deoxy-D-xylulose 5-phosphate</name>
        <dbReference type="ChEBI" id="CHEBI:57792"/>
    </ligand>
</feature>
<feature type="binding site" evidence="1">
    <location>
        <begin position="205"/>
        <end position="206"/>
    </location>
    <ligand>
        <name>1-deoxy-D-xylulose 5-phosphate</name>
        <dbReference type="ChEBI" id="CHEBI:57792"/>
    </ligand>
</feature>